<evidence type="ECO:0000250" key="1"/>
<evidence type="ECO:0000305" key="2"/>
<evidence type="ECO:0000312" key="3">
    <source>
        <dbReference type="EMBL" id="VUC58093.1"/>
    </source>
</evidence>
<evidence type="ECO:0000312" key="4">
    <source>
        <dbReference type="Proteomes" id="UP000074855"/>
    </source>
</evidence>
<gene>
    <name type="primary">RPB11</name>
    <name type="ORF">PB000758.01.0</name>
    <name evidence="3" type="ORF">PBANKA_1403400</name>
</gene>
<protein>
    <recommendedName>
        <fullName>Probable DNA-directed RNA polymerase II subunit RPB11</fullName>
        <shortName>RNA polymerase II subunit B11</shortName>
    </recommendedName>
    <alternativeName>
        <fullName>DNA-directed RNA polymerase II subunit J</fullName>
    </alternativeName>
</protein>
<proteinExistence type="inferred from homology"/>
<comment type="function">
    <text evidence="1">DNA-dependent RNA polymerase catalyzes the transcription of DNA into RNA using the four ribonucleoside triphosphates as substrates. Component of RNA polymerase II which synthesizes mRNA precursors and many functional non-coding RNAs. Pol II is the central component of the basal RNA polymerase II transcription machinery. It is composed of mobile elements that move relative to each other. RPB11 is part of the core element with the central large cleft (By similarity).</text>
</comment>
<comment type="subunit">
    <text evidence="1">Component of the RNA polymerase II (Pol II) complex consisting of 12 subunits.</text>
</comment>
<comment type="subcellular location">
    <subcellularLocation>
        <location evidence="1">Nucleus</location>
    </subcellularLocation>
</comment>
<comment type="similarity">
    <text evidence="2">Belongs to the archaeal Rpo11/eukaryotic RPB11/RPC19 RNA polymerase subunit family.</text>
</comment>
<sequence length="126" mass="14206">MSVPTLSNKPENVDLLVLPHGEEKVKCQISDKGDCNIFTIKLEDHTIGNLIKQSLCQDPKVTFAAYRQPHPLQNVIEITIRPKGYAGVKLLSDNVHTILNQVSTLRETFVNKVQKYKEKNACHGNR</sequence>
<organism>
    <name type="scientific">Plasmodium berghei (strain Anka)</name>
    <dbReference type="NCBI Taxonomy" id="5823"/>
    <lineage>
        <taxon>Eukaryota</taxon>
        <taxon>Sar</taxon>
        <taxon>Alveolata</taxon>
        <taxon>Apicomplexa</taxon>
        <taxon>Aconoidasida</taxon>
        <taxon>Haemosporida</taxon>
        <taxon>Plasmodiidae</taxon>
        <taxon>Plasmodium</taxon>
        <taxon>Plasmodium (Vinckeia)</taxon>
    </lineage>
</organism>
<name>RPB11_PLABA</name>
<feature type="chain" id="PRO_0000232462" description="Probable DNA-directed RNA polymerase II subunit RPB11">
    <location>
        <begin position="1"/>
        <end position="126"/>
    </location>
</feature>
<accession>Q4YZZ7</accession>
<accession>A0A509AR92</accession>
<dbReference type="EMBL" id="LK023129">
    <property type="protein sequence ID" value="VUC58093.1"/>
    <property type="molecule type" value="Genomic_DNA"/>
</dbReference>
<dbReference type="RefSeq" id="XP_678325.1">
    <property type="nucleotide sequence ID" value="XM_673233.1"/>
</dbReference>
<dbReference type="SMR" id="Q4YZZ7"/>
<dbReference type="STRING" id="5823.A0A509AR92"/>
<dbReference type="VEuPathDB" id="PlasmoDB:PBANKA_1403400"/>
<dbReference type="eggNOG" id="KOG4392">
    <property type="taxonomic scope" value="Eukaryota"/>
</dbReference>
<dbReference type="HOGENOM" id="CLU_090381_2_2_1"/>
<dbReference type="InParanoid" id="A0A509AR92"/>
<dbReference type="OMA" id="MPHPLEN"/>
<dbReference type="Proteomes" id="UP000074855">
    <property type="component" value="Chromosome 14"/>
</dbReference>
<dbReference type="GO" id="GO:0005665">
    <property type="term" value="C:RNA polymerase II, core complex"/>
    <property type="evidence" value="ECO:0007669"/>
    <property type="project" value="InterPro"/>
</dbReference>
<dbReference type="GO" id="GO:0003677">
    <property type="term" value="F:DNA binding"/>
    <property type="evidence" value="ECO:0007669"/>
    <property type="project" value="InterPro"/>
</dbReference>
<dbReference type="GO" id="GO:0003899">
    <property type="term" value="F:DNA-directed RNA polymerase activity"/>
    <property type="evidence" value="ECO:0007669"/>
    <property type="project" value="InterPro"/>
</dbReference>
<dbReference type="GO" id="GO:0046983">
    <property type="term" value="F:protein dimerization activity"/>
    <property type="evidence" value="ECO:0007669"/>
    <property type="project" value="InterPro"/>
</dbReference>
<dbReference type="GO" id="GO:0006366">
    <property type="term" value="P:transcription by RNA polymerase II"/>
    <property type="evidence" value="ECO:0007669"/>
    <property type="project" value="InterPro"/>
</dbReference>
<dbReference type="CDD" id="cd06926">
    <property type="entry name" value="RNAP_II_RPB11"/>
    <property type="match status" value="1"/>
</dbReference>
<dbReference type="Gene3D" id="3.30.1360.10">
    <property type="entry name" value="RNA polymerase, RBP11-like subunit"/>
    <property type="match status" value="1"/>
</dbReference>
<dbReference type="HAMAP" id="MF_00261">
    <property type="entry name" value="RNApol_arch_Rpo11"/>
    <property type="match status" value="1"/>
</dbReference>
<dbReference type="InterPro" id="IPR037685">
    <property type="entry name" value="RBP11"/>
</dbReference>
<dbReference type="InterPro" id="IPR036603">
    <property type="entry name" value="RBP11-like"/>
</dbReference>
<dbReference type="InterPro" id="IPR009025">
    <property type="entry name" value="RBP11-like_dimer"/>
</dbReference>
<dbReference type="InterPro" id="IPR008193">
    <property type="entry name" value="RNA_pol_Rpb11_13-16kDa_CS"/>
</dbReference>
<dbReference type="InterPro" id="IPR022905">
    <property type="entry name" value="Rpo11-like"/>
</dbReference>
<dbReference type="PANTHER" id="PTHR13946">
    <property type="entry name" value="DNA-DIRECTED RNA POLYMERASE I,II,III"/>
    <property type="match status" value="1"/>
</dbReference>
<dbReference type="PANTHER" id="PTHR13946:SF16">
    <property type="entry name" value="DNA-DIRECTED RNA POLYMERASE II SUBUNIT RPB11"/>
    <property type="match status" value="1"/>
</dbReference>
<dbReference type="Pfam" id="PF13656">
    <property type="entry name" value="RNA_pol_L_2"/>
    <property type="match status" value="1"/>
</dbReference>
<dbReference type="SUPFAM" id="SSF55257">
    <property type="entry name" value="RBP11-like subunits of RNA polymerase"/>
    <property type="match status" value="1"/>
</dbReference>
<dbReference type="PROSITE" id="PS01154">
    <property type="entry name" value="RNA_POL_L_13KD"/>
    <property type="match status" value="1"/>
</dbReference>
<keyword id="KW-0240">DNA-directed RNA polymerase</keyword>
<keyword id="KW-0539">Nucleus</keyword>
<keyword id="KW-1185">Reference proteome</keyword>
<keyword id="KW-0804">Transcription</keyword>
<reference evidence="4" key="1">
    <citation type="journal article" date="2014" name="BMC Biol.">
        <title>A comprehensive evaluation of rodent malaria parasite genomes and gene expression.</title>
        <authorList>
            <person name="Otto T.D."/>
            <person name="Bohme U."/>
            <person name="Jackson A.P."/>
            <person name="Hunt M."/>
            <person name="Franke-Fayard B."/>
            <person name="Hoeijmakers W.A."/>
            <person name="Religa A.A."/>
            <person name="Robertson L."/>
            <person name="Sanders M."/>
            <person name="Ogun S.A."/>
            <person name="Cunningham D."/>
            <person name="Erhart A."/>
            <person name="Billker O."/>
            <person name="Khan S.M."/>
            <person name="Stunnenberg H.G."/>
            <person name="Langhorne J."/>
            <person name="Holder A.A."/>
            <person name="Waters A.P."/>
            <person name="Newbold C.I."/>
            <person name="Pain A."/>
            <person name="Berriman M."/>
            <person name="Janse C.J."/>
        </authorList>
    </citation>
    <scope>NUCLEOTIDE SEQUENCE [LARGE SCALE GENOMIC DNA]</scope>
    <source>
        <strain evidence="4">ANKA</strain>
    </source>
</reference>